<dbReference type="EMBL" id="X52995">
    <property type="protein sequence ID" value="CAA37184.1"/>
    <property type="molecule type" value="Genomic_DNA"/>
</dbReference>
<dbReference type="EMBL" id="AEQZ01000029">
    <property type="protein sequence ID" value="EFV63516.1"/>
    <property type="molecule type" value="Genomic_DNA"/>
</dbReference>
<dbReference type="EMBL" id="CP002420">
    <property type="protein sequence ID" value="ADY95410.1"/>
    <property type="molecule type" value="Genomic_DNA"/>
</dbReference>
<dbReference type="PIR" id="T01682">
    <property type="entry name" value="T01682"/>
</dbReference>
<dbReference type="RefSeq" id="WP_002244169.1">
    <property type="nucleotide sequence ID" value="NZ_AEQZ01000029.1"/>
</dbReference>
<dbReference type="PDB" id="2MPA">
    <property type="method" value="X-ray"/>
    <property type="resolution" value="2.60 A"/>
    <property type="chains" value="P=199-206"/>
</dbReference>
<dbReference type="PDBsum" id="2MPA"/>
<dbReference type="SMR" id="E6MXW0"/>
<dbReference type="ABCD" id="E6MXW0">
    <property type="antibodies" value="7 sequenced antibodies"/>
</dbReference>
<dbReference type="KEGG" id="nmh:NMBH4476_0791"/>
<dbReference type="PATRIC" id="fig|909420.3.peg.1096"/>
<dbReference type="HOGENOM" id="CLU_038238_4_0_4"/>
<dbReference type="EvolutionaryTrace" id="E6MXW0"/>
<dbReference type="Proteomes" id="UP000032707">
    <property type="component" value="Unassembled WGS sequence"/>
</dbReference>
<dbReference type="GO" id="GO:0009279">
    <property type="term" value="C:cell outer membrane"/>
    <property type="evidence" value="ECO:0007669"/>
    <property type="project" value="UniProtKB-SubCell"/>
</dbReference>
<dbReference type="GO" id="GO:0046930">
    <property type="term" value="C:pore complex"/>
    <property type="evidence" value="ECO:0007669"/>
    <property type="project" value="UniProtKB-KW"/>
</dbReference>
<dbReference type="GO" id="GO:0015288">
    <property type="term" value="F:porin activity"/>
    <property type="evidence" value="ECO:0007669"/>
    <property type="project" value="UniProtKB-KW"/>
</dbReference>
<dbReference type="GO" id="GO:0034220">
    <property type="term" value="P:monoatomic ion transmembrane transport"/>
    <property type="evidence" value="ECO:0007669"/>
    <property type="project" value="InterPro"/>
</dbReference>
<dbReference type="CDD" id="cd00342">
    <property type="entry name" value="gram_neg_porins"/>
    <property type="match status" value="1"/>
</dbReference>
<dbReference type="Gene3D" id="2.40.160.10">
    <property type="entry name" value="Porin"/>
    <property type="match status" value="1"/>
</dbReference>
<dbReference type="InterPro" id="IPR050298">
    <property type="entry name" value="Gram-neg_bact_OMP"/>
</dbReference>
<dbReference type="InterPro" id="IPR033900">
    <property type="entry name" value="Gram_neg_porin_domain"/>
</dbReference>
<dbReference type="InterPro" id="IPR023614">
    <property type="entry name" value="Porin_dom_sf"/>
</dbReference>
<dbReference type="InterPro" id="IPR001702">
    <property type="entry name" value="Porin_Gram-ve"/>
</dbReference>
<dbReference type="InterPro" id="IPR013793">
    <property type="entry name" value="Porin_Gram-ve_CS"/>
</dbReference>
<dbReference type="InterPro" id="IPR002299">
    <property type="entry name" value="Porin_Neis"/>
</dbReference>
<dbReference type="PANTHER" id="PTHR34501:SF9">
    <property type="entry name" value="MAJOR OUTER MEMBRANE PROTEIN P.IA"/>
    <property type="match status" value="1"/>
</dbReference>
<dbReference type="PANTHER" id="PTHR34501">
    <property type="entry name" value="PROTEIN YDDL-RELATED"/>
    <property type="match status" value="1"/>
</dbReference>
<dbReference type="Pfam" id="PF00267">
    <property type="entry name" value="Porin_1"/>
    <property type="match status" value="1"/>
</dbReference>
<dbReference type="PRINTS" id="PR00182">
    <property type="entry name" value="ECOLNEIPORIN"/>
</dbReference>
<dbReference type="PRINTS" id="PR00184">
    <property type="entry name" value="NEISSPPORIN"/>
</dbReference>
<dbReference type="SUPFAM" id="SSF56935">
    <property type="entry name" value="Porins"/>
    <property type="match status" value="1"/>
</dbReference>
<dbReference type="PROSITE" id="PS00576">
    <property type="entry name" value="GRAM_NEG_PORIN"/>
    <property type="match status" value="1"/>
</dbReference>
<proteinExistence type="evidence at protein level"/>
<keyword id="KW-0002">3D-structure</keyword>
<keyword id="KW-0998">Cell outer membrane</keyword>
<keyword id="KW-0406">Ion transport</keyword>
<keyword id="KW-0472">Membrane</keyword>
<keyword id="KW-0626">Porin</keyword>
<keyword id="KW-0732">Signal</keyword>
<keyword id="KW-0812">Transmembrane</keyword>
<keyword id="KW-1134">Transmembrane beta strand</keyword>
<keyword id="KW-0813">Transport</keyword>
<name>OMPA_NEIMH</name>
<accession>E6MXW0</accession>
<accession>Q51240</accession>
<organism>
    <name type="scientific">Neisseria meningitidis serogroup B / serotype 15 (strain H44/76)</name>
    <dbReference type="NCBI Taxonomy" id="909420"/>
    <lineage>
        <taxon>Bacteria</taxon>
        <taxon>Pseudomonadati</taxon>
        <taxon>Pseudomonadota</taxon>
        <taxon>Betaproteobacteria</taxon>
        <taxon>Neisseriales</taxon>
        <taxon>Neisseriaceae</taxon>
        <taxon>Neisseria</taxon>
    </lineage>
</organism>
<evidence type="ECO:0000250" key="1"/>
<evidence type="ECO:0000305" key="2"/>
<protein>
    <recommendedName>
        <fullName>Major outer membrane protein P.IA</fullName>
        <shortName>PIA</shortName>
        <shortName>Protein IA</shortName>
    </recommendedName>
    <alternativeName>
        <fullName>Class 1 protein</fullName>
    </alternativeName>
</protein>
<comment type="function">
    <text evidence="1">Serves as a slightly cation selective porin. Major antigen on the gonococcal cell surface and it may have pathogenic properties in addition to its porin activity (By similarity).</text>
</comment>
<comment type="subunit">
    <text evidence="1">Homotrimer.</text>
</comment>
<comment type="subcellular location">
    <subcellularLocation>
        <location evidence="1">Cell outer membrane</location>
        <topology evidence="1">Multi-pass membrane protein</topology>
    </subcellularLocation>
</comment>
<comment type="similarity">
    <text evidence="2">Belongs to the Gram-negative porin family.</text>
</comment>
<gene>
    <name type="primary">porA</name>
    <name type="ordered locus">NMBH4476_0791</name>
    <name type="ORF">NMH_1198</name>
</gene>
<sequence>MRKKLTALVLSALPLAAVADVSLYGEIKAGVEGRNYQLQLTEAQAANGGASGQVKVTKVTKAKSRIRTKISDFGSFIGFKGSEDLGDGLKAVWQLEQDVSVAGGGATQWGNRESFIGLAGEFGTLRAGRVANQFDDASQAIDPWDSNNDVASQLGIFKRHDDMPVSVRYDSPEFSGFSGSVQFVPIQNSKSAYTPAYYTKDTNNNLTLVPAVVGKPGSDVYYAGLNYKNGGFAGNYAFKYARHANVGRNAFELFLIGSGSDQAKGTDPLKNHQVHRLTGGYEEGGLNLALAAQLDLSENGDKTKNSTTEIAATASYRFGNAVPRISYAHGFDFIERGKKGENTSYDQIIAGVDYDFSKRTSAIVSGAWLKRNTGIGNYTQINAASVGLRHKF</sequence>
<feature type="signal peptide" evidence="1">
    <location>
        <begin position="1"/>
        <end position="19"/>
    </location>
</feature>
<feature type="chain" id="PRO_0000411248" description="Major outer membrane protein P.IA">
    <location>
        <begin position="20"/>
        <end position="392"/>
    </location>
</feature>
<reference key="1">
    <citation type="journal article" date="1990" name="J. Exp. Med.">
        <title>Deduced amino acid sequences of class 1 protein (PorA) from three strains of Neisseria meningitidis. Synthetic peptides define the epitopes responsible for serosubtype specificity.</title>
        <authorList>
            <person name="McGuinnes B."/>
            <person name="Barlow A.K."/>
            <person name="Clarke I.N."/>
            <person name="Farley J.E."/>
            <person name="Anilionis A."/>
            <person name="Poolman J.T."/>
            <person name="Heckels J.E."/>
        </authorList>
    </citation>
    <scope>NUCLEOTIDE SEQUENCE [GENOMIC DNA]</scope>
    <source>
        <strain>H44/76</strain>
    </source>
</reference>
<reference key="2">
    <citation type="journal article" date="2011" name="J. Bacteriol.">
        <title>Genome sequence of Neisseria meningitidis serogroup B strain H44/76.</title>
        <authorList>
            <person name="Piet J.R."/>
            <person name="Huis In 't Veld R.A."/>
            <person name="van Schaik B.D."/>
            <person name="van Kampen A.H."/>
            <person name="Baas F."/>
            <person name="van de Beek D."/>
            <person name="Pannekoek Y."/>
            <person name="van der Ende A."/>
        </authorList>
    </citation>
    <scope>NUCLEOTIDE SEQUENCE [LARGE SCALE GENOMIC DNA]</scope>
    <source>
        <strain>H44/76</strain>
    </source>
</reference>
<reference key="3">
    <citation type="journal article" date="2011" name="Proc. Natl. Acad. Sci. U.S.A.">
        <title>Neisseria meningitidis is structured in clades associated with restriction modification systems that modulate homologous recombination.</title>
        <authorList>
            <person name="Budroni S."/>
            <person name="Siena E."/>
            <person name="Hotopp J.C."/>
            <person name="Seib K.L."/>
            <person name="Serruto D."/>
            <person name="Nofroni C."/>
            <person name="Comanducci M."/>
            <person name="Riley D.R."/>
            <person name="Daugherty S.C."/>
            <person name="Angiuoli S.V."/>
            <person name="Covacci A."/>
            <person name="Pizza M."/>
            <person name="Rappuoli R."/>
            <person name="Moxon E.R."/>
            <person name="Tettelin H."/>
            <person name="Medini D."/>
        </authorList>
    </citation>
    <scope>NUCLEOTIDE SEQUENCE [LARGE SCALE GENOMIC DNA]</scope>
    <source>
        <strain>H44/76</strain>
    </source>
</reference>